<sequence length="160" mass="16371">MKGGAGVPDLPSLDASGVRLAIVASSWHGKICDALLDGARKVAAGCGLDDPTVVRVLGAIEIPVVAQELARNHDAVVALGVVIRGQTPHFDYVCDAVTQGLTRVSLDSSTPIANGVLTTNTEEQALDRAGLPTSAEDKGAQATVAALATALTLRELRAHS</sequence>
<name>RISB_MYCTU</name>
<feature type="chain" id="PRO_0000134772" description="6,7-dimethyl-8-ribityllumazine synthase">
    <location>
        <begin position="1"/>
        <end position="160"/>
    </location>
</feature>
<feature type="active site" description="Proton donor" evidence="1">
    <location>
        <position position="89"/>
    </location>
</feature>
<feature type="binding site">
    <location>
        <position position="27"/>
    </location>
    <ligand>
        <name>5-amino-6-(D-ribitylamino)uracil</name>
        <dbReference type="ChEBI" id="CHEBI:15934"/>
    </ligand>
</feature>
<feature type="binding site">
    <location>
        <begin position="59"/>
        <end position="61"/>
    </location>
    <ligand>
        <name>5-amino-6-(D-ribitylamino)uracil</name>
        <dbReference type="ChEBI" id="CHEBI:15934"/>
    </ligand>
</feature>
<feature type="binding site">
    <location>
        <begin position="81"/>
        <end position="83"/>
    </location>
    <ligand>
        <name>5-amino-6-(D-ribitylamino)uracil</name>
        <dbReference type="ChEBI" id="CHEBI:15934"/>
    </ligand>
</feature>
<feature type="binding site" evidence="5">
    <location>
        <begin position="86"/>
        <end position="87"/>
    </location>
    <ligand>
        <name>(2S)-2-hydroxy-3-oxobutyl phosphate</name>
        <dbReference type="ChEBI" id="CHEBI:58830"/>
    </ligand>
</feature>
<feature type="binding site">
    <location>
        <position position="114"/>
    </location>
    <ligand>
        <name>5-amino-6-(D-ribitylamino)uracil</name>
        <dbReference type="ChEBI" id="CHEBI:15934"/>
    </ligand>
</feature>
<feature type="binding site" evidence="5">
    <location>
        <position position="128"/>
    </location>
    <ligand>
        <name>(2S)-2-hydroxy-3-oxobutyl phosphate</name>
        <dbReference type="ChEBI" id="CHEBI:58830"/>
    </ligand>
</feature>
<feature type="strand" evidence="6">
    <location>
        <begin position="20"/>
        <end position="25"/>
    </location>
</feature>
<feature type="helix" evidence="6">
    <location>
        <begin position="29"/>
        <end position="45"/>
    </location>
</feature>
<feature type="strand" evidence="6">
    <location>
        <begin position="52"/>
        <end position="58"/>
    </location>
</feature>
<feature type="helix" evidence="6">
    <location>
        <begin position="59"/>
        <end position="61"/>
    </location>
</feature>
<feature type="helix" evidence="6">
    <location>
        <begin position="62"/>
        <end position="70"/>
    </location>
</feature>
<feature type="strand" evidence="6">
    <location>
        <begin position="74"/>
        <end position="83"/>
    </location>
</feature>
<feature type="helix" evidence="6">
    <location>
        <begin position="89"/>
        <end position="108"/>
    </location>
</feature>
<feature type="strand" evidence="6">
    <location>
        <begin position="112"/>
        <end position="121"/>
    </location>
</feature>
<feature type="helix" evidence="6">
    <location>
        <begin position="122"/>
        <end position="126"/>
    </location>
</feature>
<feature type="helix" evidence="6">
    <location>
        <begin position="138"/>
        <end position="156"/>
    </location>
</feature>
<protein>
    <recommendedName>
        <fullName>6,7-dimethyl-8-ribityllumazine synthase</fullName>
        <shortName>DMRL synthase</shortName>
        <shortName>LS</shortName>
        <shortName>Lumazine synthase</shortName>
        <ecNumber>2.5.1.78</ecNumber>
    </recommendedName>
</protein>
<organism>
    <name type="scientific">Mycobacterium tuberculosis (strain ATCC 25618 / H37Rv)</name>
    <dbReference type="NCBI Taxonomy" id="83332"/>
    <lineage>
        <taxon>Bacteria</taxon>
        <taxon>Bacillati</taxon>
        <taxon>Actinomycetota</taxon>
        <taxon>Actinomycetes</taxon>
        <taxon>Mycobacteriales</taxon>
        <taxon>Mycobacteriaceae</taxon>
        <taxon>Mycobacterium</taxon>
        <taxon>Mycobacterium tuberculosis complex</taxon>
    </lineage>
</organism>
<evidence type="ECO:0000255" key="1"/>
<evidence type="ECO:0000269" key="2">
    <source>
    </source>
</evidence>
<evidence type="ECO:0000269" key="3">
    <source>
    </source>
</evidence>
<evidence type="ECO:0000269" key="4">
    <source>
    </source>
</evidence>
<evidence type="ECO:0000305" key="5"/>
<evidence type="ECO:0007829" key="6">
    <source>
        <dbReference type="PDB" id="2C92"/>
    </source>
</evidence>
<comment type="function">
    <text evidence="3">Catalyzes the formation of 6,7-dimethyl-8-ribityllumazine by condensation of 5-amino-6-(D-ribitylamino)uracil with 3,4-dihydroxy-2-butanone 4-phosphate. This is the penultimate step in the biosynthesis of riboflavin.</text>
</comment>
<comment type="catalytic activity">
    <reaction>
        <text>(2S)-2-hydroxy-3-oxobutyl phosphate + 5-amino-6-(D-ribitylamino)uracil = 6,7-dimethyl-8-(1-D-ribityl)lumazine + phosphate + 2 H2O + H(+)</text>
        <dbReference type="Rhea" id="RHEA:26152"/>
        <dbReference type="ChEBI" id="CHEBI:15377"/>
        <dbReference type="ChEBI" id="CHEBI:15378"/>
        <dbReference type="ChEBI" id="CHEBI:15934"/>
        <dbReference type="ChEBI" id="CHEBI:43474"/>
        <dbReference type="ChEBI" id="CHEBI:58201"/>
        <dbReference type="ChEBI" id="CHEBI:58830"/>
        <dbReference type="EC" id="2.5.1.78"/>
    </reaction>
</comment>
<comment type="activity regulation">
    <text evidence="2">Activity is competitively inhibited by substituted ribitylpurinetrione compounds such as 3-(1,3,7,9-tetrahydro-9-D-ribityl-2,6,8-trioxopurin-7-yl)propane 1-phosphate, with inhibition constants in the 4-5 nM range.</text>
</comment>
<comment type="pathway">
    <text>Cofactor biosynthesis; riboflavin biosynthesis; riboflavin from 2-hydroxy-3-oxobutyl phosphate and 5-amino-6-(D-ribitylamino)uracil: step 1/2.</text>
</comment>
<comment type="subunit">
    <text evidence="3 4">Homopentamer.</text>
</comment>
<comment type="miscellaneous">
    <text>Was identified as a high-confidence drug target.</text>
</comment>
<comment type="similarity">
    <text evidence="5">Belongs to the DMRL synthase family.</text>
</comment>
<reference key="1">
    <citation type="journal article" date="1998" name="Nature">
        <title>Deciphering the biology of Mycobacterium tuberculosis from the complete genome sequence.</title>
        <authorList>
            <person name="Cole S.T."/>
            <person name="Brosch R."/>
            <person name="Parkhill J."/>
            <person name="Garnier T."/>
            <person name="Churcher C.M."/>
            <person name="Harris D.E."/>
            <person name="Gordon S.V."/>
            <person name="Eiglmeier K."/>
            <person name="Gas S."/>
            <person name="Barry C.E. III"/>
            <person name="Tekaia F."/>
            <person name="Badcock K."/>
            <person name="Basham D."/>
            <person name="Brown D."/>
            <person name="Chillingworth T."/>
            <person name="Connor R."/>
            <person name="Davies R.M."/>
            <person name="Devlin K."/>
            <person name="Feltwell T."/>
            <person name="Gentles S."/>
            <person name="Hamlin N."/>
            <person name="Holroyd S."/>
            <person name="Hornsby T."/>
            <person name="Jagels K."/>
            <person name="Krogh A."/>
            <person name="McLean J."/>
            <person name="Moule S."/>
            <person name="Murphy L.D."/>
            <person name="Oliver S."/>
            <person name="Osborne J."/>
            <person name="Quail M.A."/>
            <person name="Rajandream M.A."/>
            <person name="Rogers J."/>
            <person name="Rutter S."/>
            <person name="Seeger K."/>
            <person name="Skelton S."/>
            <person name="Squares S."/>
            <person name="Squares R."/>
            <person name="Sulston J.E."/>
            <person name="Taylor K."/>
            <person name="Whitehead S."/>
            <person name="Barrell B.G."/>
        </authorList>
    </citation>
    <scope>NUCLEOTIDE SEQUENCE [LARGE SCALE GENOMIC DNA]</scope>
    <source>
        <strain>ATCC 25618 / H37Rv</strain>
    </source>
</reference>
<reference key="2">
    <citation type="journal article" date="2004" name="J. Org. Chem.">
        <title>Design, synthesis, and evaluation of 9-D-ribitylamino-1,3,7,9-tetrahydro-2,6,8-purinetriones bearing alkyl phosphate and alpha,alpha-difluorophosphonate substituents as inhibitors of riboflavin synthase and lumazine synthase.</title>
        <authorList>
            <person name="Cushman M."/>
            <person name="Sambaiah T."/>
            <person name="Jin G."/>
            <person name="Illarionov B."/>
            <person name="Fischer M."/>
            <person name="Bacher A."/>
        </authorList>
    </citation>
    <scope>ACTIVITY REGULATION</scope>
</reference>
<reference key="3">
    <citation type="journal article" date="2007" name="Microbiology">
        <title>Experimental determination of translational starts using peptide mass mapping and tandem mass spectrometry within the proteome of Mycobacterium tuberculosis.</title>
        <authorList>
            <person name="Rison S.C."/>
            <person name="Mattow J."/>
            <person name="Jungblut P.R."/>
            <person name="Stoker N.G."/>
        </authorList>
    </citation>
    <scope>IDENTIFICATION BY MASS SPECTROMETRY</scope>
    <scope>DETERMINATION OF TRANSLATIONAL START SITE</scope>
    <source>
        <strain>ATCC 25618 / H37Rv</strain>
    </source>
</reference>
<reference key="4">
    <citation type="journal article" date="2008" name="BMC Syst. Biol.">
        <title>targetTB: a target identification pipeline for Mycobacterium tuberculosis through an interactome, reactome and genome-scale structural analysis.</title>
        <authorList>
            <person name="Raman K."/>
            <person name="Yeturu K."/>
            <person name="Chandra N."/>
        </authorList>
    </citation>
    <scope>IDENTIFICATION AS A DRUG TARGET [LARGE SCALE ANALYSIS]</scope>
</reference>
<reference key="5">
    <citation type="journal article" date="2011" name="Mol. Cell. Proteomics">
        <title>Proteogenomic analysis of Mycobacterium tuberculosis by high resolution mass spectrometry.</title>
        <authorList>
            <person name="Kelkar D.S."/>
            <person name="Kumar D."/>
            <person name="Kumar P."/>
            <person name="Balakrishnan L."/>
            <person name="Muthusamy B."/>
            <person name="Yadav A.K."/>
            <person name="Shrivastava P."/>
            <person name="Marimuthu A."/>
            <person name="Anand S."/>
            <person name="Sundaram H."/>
            <person name="Kingsbury R."/>
            <person name="Harsha H.C."/>
            <person name="Nair B."/>
            <person name="Prasad T.S."/>
            <person name="Chauhan D.S."/>
            <person name="Katoch K."/>
            <person name="Katoch V.M."/>
            <person name="Kumar P."/>
            <person name="Chaerkady R."/>
            <person name="Ramachandran S."/>
            <person name="Dash D."/>
            <person name="Pandey A."/>
        </authorList>
    </citation>
    <scope>IDENTIFICATION BY MASS SPECTROMETRY [LARGE SCALE ANALYSIS]</scope>
    <source>
        <strain>ATCC 25618 / H37Rv</strain>
    </source>
</reference>
<reference key="6">
    <citation type="journal article" date="2005" name="Biochemistry">
        <title>Crystal structure of lumazine synthase from Mycobacterium tuberculosis as a target for rational drug design: binding mode of a new class of purinetrione inhibitors.</title>
        <authorList>
            <person name="Morgunova E."/>
            <person name="Meining W."/>
            <person name="Illarionov B."/>
            <person name="Haase I."/>
            <person name="Jin G."/>
            <person name="Bacher A."/>
            <person name="Cushman M."/>
            <person name="Fischer M."/>
            <person name="Ladenstein R."/>
        </authorList>
    </citation>
    <scope>X-RAY CRYSTALLOGRAPHY (2.0 ANGSTROMS) IN COMPLEXES WITH PURINETRIONE INHIBITORS</scope>
    <scope>FUNCTION</scope>
    <scope>SUBUNIT</scope>
</reference>
<reference key="7">
    <citation type="journal article" date="2006" name="FEBS J.">
        <title>Structural and thermodynamic insights into the binding mode of five novel inhibitors of lumazine synthase from Mycobacterium tuberculosis.</title>
        <authorList>
            <person name="Morgunova E."/>
            <person name="Illarionov B."/>
            <person name="Sambaiah T."/>
            <person name="Haase I."/>
            <person name="Bacher A."/>
            <person name="Cushman M."/>
            <person name="Fischer M."/>
            <person name="Ladenstein R."/>
        </authorList>
    </citation>
    <scope>X-RAY CRYSTALLOGRAPHY (1.6 ANGSTROMS) IN COMPLEXES WITH PURINETRIONE AND CHLOROPYRIMIDINE INHIBITORS</scope>
</reference>
<reference key="8">
    <citation type="journal article" date="2008" name="J. Org. Chem.">
        <title>A new series of N-[2,4-dioxo-6-d-ribitylamino-1,2,3,4-tetrahydropyrimidin-5-yl]oxalamic acid derivatives as inhibitors of lumazine synthase and riboflavin synthase: design, synthesis, biochemical evaluation, crystallography, and mechanistic implications.</title>
        <authorList>
            <person name="Zhang Y."/>
            <person name="Illarionov B."/>
            <person name="Morgunova E."/>
            <person name="Jin G."/>
            <person name="Bacher A."/>
            <person name="Fischer M."/>
            <person name="Ladenstein R."/>
            <person name="Cushman M."/>
        </authorList>
    </citation>
    <scope>X-RAY CRYSTALLOGRAPHY (2.3 ANGSTROMS) IN COMPLEX WITH A REACTION INTERMEDIATE ANALOG INHIBITOR AND PHOSPHATE</scope>
    <scope>REACTION MECHANISM</scope>
</reference>
<gene>
    <name type="primary">ribH</name>
    <name type="ordered locus">Rv1416</name>
    <name type="ORF">MTCY21B4.34</name>
</gene>
<proteinExistence type="evidence at protein level"/>
<accession>P9WHE9</accession>
<accession>L0T874</accession>
<accession>P66034</accession>
<accession>P71685</accession>
<keyword id="KW-0002">3D-structure</keyword>
<keyword id="KW-1185">Reference proteome</keyword>
<keyword id="KW-0686">Riboflavin biosynthesis</keyword>
<keyword id="KW-0808">Transferase</keyword>
<dbReference type="EC" id="2.5.1.78"/>
<dbReference type="EMBL" id="AL123456">
    <property type="protein sequence ID" value="CCP44175.1"/>
    <property type="molecule type" value="Genomic_DNA"/>
</dbReference>
<dbReference type="PIR" id="E70902">
    <property type="entry name" value="E70902"/>
</dbReference>
<dbReference type="RefSeq" id="NP_215932.2">
    <property type="nucleotide sequence ID" value="NC_000962.3"/>
</dbReference>
<dbReference type="RefSeq" id="WP_003898872.1">
    <property type="nucleotide sequence ID" value="NZ_NVQJ01000038.1"/>
</dbReference>
<dbReference type="PDB" id="1W19">
    <property type="method" value="X-ray"/>
    <property type="resolution" value="2.00 A"/>
    <property type="chains" value="A/B/C/D/E=1-160"/>
</dbReference>
<dbReference type="PDB" id="1W29">
    <property type="method" value="X-ray"/>
    <property type="resolution" value="2.30 A"/>
    <property type="chains" value="A/B/C/D/E=1-160"/>
</dbReference>
<dbReference type="PDB" id="2C92">
    <property type="method" value="X-ray"/>
    <property type="resolution" value="1.60 A"/>
    <property type="chains" value="A/B/C/D/E=1-160"/>
</dbReference>
<dbReference type="PDB" id="2C94">
    <property type="method" value="X-ray"/>
    <property type="resolution" value="1.90 A"/>
    <property type="chains" value="A/B/C/D/E=1-160"/>
</dbReference>
<dbReference type="PDB" id="2C97">
    <property type="method" value="X-ray"/>
    <property type="resolution" value="2.00 A"/>
    <property type="chains" value="A/B/C/D/E=1-160"/>
</dbReference>
<dbReference type="PDB" id="2C9B">
    <property type="method" value="X-ray"/>
    <property type="resolution" value="2.75 A"/>
    <property type="chains" value="A/B/C/D/E/F/G/H/I/J=1-160"/>
</dbReference>
<dbReference type="PDB" id="2C9D">
    <property type="method" value="X-ray"/>
    <property type="resolution" value="2.80 A"/>
    <property type="chains" value="A/B/C/D/E/F/G/H/I/J=1-160"/>
</dbReference>
<dbReference type="PDB" id="2VI5">
    <property type="method" value="X-ray"/>
    <property type="resolution" value="2.30 A"/>
    <property type="chains" value="A/B/C/D/E/F/G/H/I/J=1-160"/>
</dbReference>
<dbReference type="PDBsum" id="1W19"/>
<dbReference type="PDBsum" id="1W29"/>
<dbReference type="PDBsum" id="2C92"/>
<dbReference type="PDBsum" id="2C94"/>
<dbReference type="PDBsum" id="2C97"/>
<dbReference type="PDBsum" id="2C9B"/>
<dbReference type="PDBsum" id="2C9D"/>
<dbReference type="PDBsum" id="2VI5"/>
<dbReference type="SMR" id="P9WHE9"/>
<dbReference type="FunCoup" id="P9WHE9">
    <property type="interactions" value="429"/>
</dbReference>
<dbReference type="STRING" id="83332.Rv1416"/>
<dbReference type="BindingDB" id="P9WHE9"/>
<dbReference type="ChEMBL" id="CHEMBL1075177"/>
<dbReference type="DrugBank" id="DB02693">
    <property type="generic name" value="(4S,5S)-1,2-dithiane-4,5-diol"/>
</dbReference>
<dbReference type="DrugBank" id="DB02135">
    <property type="generic name" value="1-deoxy-1-{2,6,8-trioxo-7-[4-(phosphonooxy)butyl]-1,2,3,6,7,8-hexahydro-9H-purin-9-yl}-D-arabinitol"/>
</dbReference>
<dbReference type="DrugBank" id="DB03973">
    <property type="generic name" value="3-[2,6,8-Trioxo-9-[(2R,3R,4R)-2,3,4,5-tetrahydroxypentyl]-3H-purin-7-yl]propyl dihydrogen phosphate"/>
</dbReference>
<dbReference type="DrugBank" id="DB03022">
    <property type="generic name" value="3-[2,6,8-Trioxo-9-[(2R,3S,4R)-2,3,4,5-tetrahydroxypentyl]-3H-purin-7-yl]propyl dihydrogen phosphate"/>
</dbReference>
<dbReference type="DrugBank" id="DB03812">
    <property type="generic name" value="3-{2,6,8-trioxo-9-[(2S,3R,4R)-2,3,4,5-tetrahydroxypentyl]-1,2,3,6,8,9-hexahydro-7H-purin-7-Yl}propyl dihydrogen phosphate"/>
</dbReference>
<dbReference type="DrugBank" id="DB02290">
    <property type="generic name" value="3-{2,6,8-trioxo-9-[(2S,3S,4R)-2,3,4,5-tetrahydroxypentyl]-1,2,3,6,8,9-hexahydro-7H-purin-7-Yl}propyl dihydrogen phosphate"/>
</dbReference>
<dbReference type="DrugBank" id="DB08016">
    <property type="generic name" value="4-(6-CHLORO-2,4-DIOXO-1,2,3,4-TETRAHYDROPYRIMIDIN-5-YL) BUTYL PHOSPHATE"/>
</dbReference>
<dbReference type="DrugBank" id="DB02711">
    <property type="generic name" value="4-{2,6,8-Trioxo-9-[(2S,3R,4R)-2,3,4,5-Tetrahydroxypentyl]-1,2,3,6,8,9-Hexahydro-7h-Purin-7-Yl}Butyl Dihydrogen Phosphate"/>
</dbReference>
<dbReference type="DrugBank" id="DB02184">
    <property type="generic name" value="D-1,4-dithiothreitol"/>
</dbReference>
<dbReference type="DrugBank" id="DB01692">
    <property type="generic name" value="Dithioerythritol"/>
</dbReference>
<dbReference type="PaxDb" id="83332-Rv1416"/>
<dbReference type="GeneID" id="886681"/>
<dbReference type="KEGG" id="mtu:Rv1416"/>
<dbReference type="KEGG" id="mtv:RVBD_1416"/>
<dbReference type="TubercuList" id="Rv1416"/>
<dbReference type="eggNOG" id="COG0054">
    <property type="taxonomic scope" value="Bacteria"/>
</dbReference>
<dbReference type="InParanoid" id="P9WHE9"/>
<dbReference type="OrthoDB" id="9809709at2"/>
<dbReference type="UniPathway" id="UPA00275">
    <property type="reaction ID" value="UER00404"/>
</dbReference>
<dbReference type="EvolutionaryTrace" id="P9WHE9"/>
<dbReference type="Proteomes" id="UP000001584">
    <property type="component" value="Chromosome"/>
</dbReference>
<dbReference type="GO" id="GO:0005737">
    <property type="term" value="C:cytoplasm"/>
    <property type="evidence" value="ECO:0000318"/>
    <property type="project" value="GO_Central"/>
</dbReference>
<dbReference type="GO" id="GO:0005829">
    <property type="term" value="C:cytosol"/>
    <property type="evidence" value="ECO:0000318"/>
    <property type="project" value="GO_Central"/>
</dbReference>
<dbReference type="GO" id="GO:0009349">
    <property type="term" value="C:riboflavin synthase complex"/>
    <property type="evidence" value="ECO:0007669"/>
    <property type="project" value="InterPro"/>
</dbReference>
<dbReference type="GO" id="GO:0000906">
    <property type="term" value="F:6,7-dimethyl-8-ribityllumazine synthase activity"/>
    <property type="evidence" value="ECO:0000318"/>
    <property type="project" value="GO_Central"/>
</dbReference>
<dbReference type="GO" id="GO:0009231">
    <property type="term" value="P:riboflavin biosynthetic process"/>
    <property type="evidence" value="ECO:0000318"/>
    <property type="project" value="GO_Central"/>
</dbReference>
<dbReference type="CDD" id="cd09209">
    <property type="entry name" value="Lumazine_synthase-I"/>
    <property type="match status" value="1"/>
</dbReference>
<dbReference type="FunFam" id="3.40.50.960:FF:000002">
    <property type="entry name" value="6,7-dimethyl-8-ribityllumazine synthase"/>
    <property type="match status" value="1"/>
</dbReference>
<dbReference type="Gene3D" id="3.40.50.960">
    <property type="entry name" value="Lumazine/riboflavin synthase"/>
    <property type="match status" value="1"/>
</dbReference>
<dbReference type="HAMAP" id="MF_00178">
    <property type="entry name" value="Lumazine_synth"/>
    <property type="match status" value="1"/>
</dbReference>
<dbReference type="InterPro" id="IPR034964">
    <property type="entry name" value="LS"/>
</dbReference>
<dbReference type="InterPro" id="IPR002180">
    <property type="entry name" value="LS/RS"/>
</dbReference>
<dbReference type="InterPro" id="IPR036467">
    <property type="entry name" value="LS/RS_sf"/>
</dbReference>
<dbReference type="NCBIfam" id="TIGR00114">
    <property type="entry name" value="lumazine-synth"/>
    <property type="match status" value="1"/>
</dbReference>
<dbReference type="PANTHER" id="PTHR21058:SF0">
    <property type="entry name" value="6,7-DIMETHYL-8-RIBITYLLUMAZINE SYNTHASE"/>
    <property type="match status" value="1"/>
</dbReference>
<dbReference type="PANTHER" id="PTHR21058">
    <property type="entry name" value="6,7-DIMETHYL-8-RIBITYLLUMAZINE SYNTHASE DMRL SYNTHASE LUMAZINE SYNTHASE"/>
    <property type="match status" value="1"/>
</dbReference>
<dbReference type="Pfam" id="PF00885">
    <property type="entry name" value="DMRL_synthase"/>
    <property type="match status" value="1"/>
</dbReference>
<dbReference type="SUPFAM" id="SSF52121">
    <property type="entry name" value="Lumazine synthase"/>
    <property type="match status" value="1"/>
</dbReference>